<feature type="chain" id="PRO_0000206200" description="Probable mesentericin-Y105 immunity protein">
    <location>
        <begin position="1"/>
        <end position="113"/>
    </location>
</feature>
<evidence type="ECO:0000305" key="1"/>
<organism>
    <name type="scientific">Leuconostoc mesenteroides</name>
    <dbReference type="NCBI Taxonomy" id="1245"/>
    <lineage>
        <taxon>Bacteria</taxon>
        <taxon>Bacillati</taxon>
        <taxon>Bacillota</taxon>
        <taxon>Bacilli</taxon>
        <taxon>Lactobacillales</taxon>
        <taxon>Lactobacillaceae</taxon>
        <taxon>Leuconostoc</taxon>
    </lineage>
</organism>
<accession>Q10420</accession>
<keyword id="KW-0079">Bacteriocin immunity</keyword>
<keyword id="KW-0614">Plasmid</keyword>
<geneLocation type="plasmid">
    <name>pHY30</name>
</geneLocation>
<gene>
    <name type="primary">mesI</name>
</gene>
<proteinExistence type="inferred from homology"/>
<dbReference type="EMBL" id="X81803">
    <property type="protein sequence ID" value="CAA57404.1"/>
    <property type="molecule type" value="Genomic_DNA"/>
</dbReference>
<dbReference type="PIR" id="S52207">
    <property type="entry name" value="S52207"/>
</dbReference>
<dbReference type="SMR" id="Q10420"/>
<dbReference type="GO" id="GO:0030153">
    <property type="term" value="P:bacteriocin immunity"/>
    <property type="evidence" value="ECO:0007669"/>
    <property type="project" value="UniProtKB-KW"/>
</dbReference>
<dbReference type="Gene3D" id="1.20.1440.50">
    <property type="entry name" value="Ta0600-like"/>
    <property type="match status" value="1"/>
</dbReference>
<dbReference type="InterPro" id="IPR015046">
    <property type="entry name" value="LciA_Immunity-like"/>
</dbReference>
<dbReference type="InterPro" id="IPR023130">
    <property type="entry name" value="Ta0600-like_sf"/>
</dbReference>
<dbReference type="Pfam" id="PF08951">
    <property type="entry name" value="EntA_Immun"/>
    <property type="match status" value="1"/>
</dbReference>
<dbReference type="SUPFAM" id="SSF109797">
    <property type="entry name" value="Bacteriocin immunity protein-like"/>
    <property type="match status" value="1"/>
</dbReference>
<reference key="1">
    <citation type="journal article" date="1995" name="Microbiology">
        <title>Mesentericin Y105 gene clusters in Leuconostoc mesenteroides Y105.</title>
        <authorList>
            <person name="Fremaux C."/>
            <person name="Hechard A."/>
            <person name="Cenatiempo Y."/>
        </authorList>
    </citation>
    <scope>NUCLEOTIDE SEQUENCE [GENOMIC DNA]</scope>
    <source>
        <strain>Y105</strain>
    </source>
</reference>
<sequence>MKKKYRYLEDSKNYTSTLYSLLVDNVDKPGYSDICDVLLQVSKKLDNTQSVEALINRLVNYIRITASTYKIIFSKKEEELIIKLGVIGQKAGLNGQYMADFSDKSQFYSVFDQ</sequence>
<protein>
    <recommendedName>
        <fullName>Probable mesentericin-Y105 immunity protein</fullName>
    </recommendedName>
</protein>
<name>MESI_LEUME</name>
<comment type="function">
    <text>Imparts immunity to mesentericin-Y105 to naturally sensitive host strains.</text>
</comment>
<comment type="similarity">
    <text evidence="1">Belongs to the immunity protein EntA family.</text>
</comment>